<keyword id="KW-0472">Membrane</keyword>
<keyword id="KW-0602">Photosynthesis</keyword>
<keyword id="KW-0604">Photosystem II</keyword>
<keyword id="KW-0674">Reaction center</keyword>
<keyword id="KW-1185">Reference proteome</keyword>
<keyword id="KW-0793">Thylakoid</keyword>
<keyword id="KW-0812">Transmembrane</keyword>
<keyword id="KW-1133">Transmembrane helix</keyword>
<feature type="chain" id="PRO_0000325713" description="Photosystem II reaction center protein M">
    <location>
        <begin position="1"/>
        <end position="52"/>
    </location>
</feature>
<feature type="transmembrane region" description="Helical" evidence="1">
    <location>
        <begin position="6"/>
        <end position="26"/>
    </location>
</feature>
<feature type="region of interest" description="Disordered" evidence="2">
    <location>
        <begin position="31"/>
        <end position="52"/>
    </location>
</feature>
<feature type="compositionally biased region" description="Basic and acidic residues" evidence="2">
    <location>
        <begin position="42"/>
        <end position="52"/>
    </location>
</feature>
<protein>
    <recommendedName>
        <fullName evidence="1">Photosystem II reaction center protein M</fullName>
        <shortName evidence="1">PSII-M</shortName>
    </recommendedName>
</protein>
<dbReference type="EMBL" id="CP000095">
    <property type="protein sequence ID" value="AAZ59181.1"/>
    <property type="molecule type" value="Genomic_DNA"/>
</dbReference>
<dbReference type="RefSeq" id="WP_011294327.1">
    <property type="nucleotide sequence ID" value="NC_007335.2"/>
</dbReference>
<dbReference type="SMR" id="Q46H51"/>
<dbReference type="STRING" id="59920.PMN2A_1693"/>
<dbReference type="KEGG" id="pmn:PMN2A_1693"/>
<dbReference type="HOGENOM" id="CLU_215415_0_0_3"/>
<dbReference type="OrthoDB" id="532820at2"/>
<dbReference type="PhylomeDB" id="Q46H51"/>
<dbReference type="Proteomes" id="UP000002535">
    <property type="component" value="Chromosome"/>
</dbReference>
<dbReference type="GO" id="GO:0009523">
    <property type="term" value="C:photosystem II"/>
    <property type="evidence" value="ECO:0007669"/>
    <property type="project" value="UniProtKB-KW"/>
</dbReference>
<dbReference type="GO" id="GO:0031676">
    <property type="term" value="C:plasma membrane-derived thylakoid membrane"/>
    <property type="evidence" value="ECO:0007669"/>
    <property type="project" value="UniProtKB-SubCell"/>
</dbReference>
<dbReference type="GO" id="GO:0019684">
    <property type="term" value="P:photosynthesis, light reaction"/>
    <property type="evidence" value="ECO:0007669"/>
    <property type="project" value="InterPro"/>
</dbReference>
<dbReference type="HAMAP" id="MF_00438">
    <property type="entry name" value="PSII_PsbM"/>
    <property type="match status" value="1"/>
</dbReference>
<dbReference type="InterPro" id="IPR007826">
    <property type="entry name" value="PSII_PsbM"/>
</dbReference>
<dbReference type="InterPro" id="IPR037269">
    <property type="entry name" value="PSII_PsbM_sf"/>
</dbReference>
<dbReference type="NCBIfam" id="NF010694">
    <property type="entry name" value="PRK14094.1"/>
    <property type="match status" value="1"/>
</dbReference>
<dbReference type="NCBIfam" id="TIGR03038">
    <property type="entry name" value="PS_II_psbM"/>
    <property type="match status" value="1"/>
</dbReference>
<dbReference type="Pfam" id="PF05151">
    <property type="entry name" value="PsbM"/>
    <property type="match status" value="1"/>
</dbReference>
<dbReference type="SUPFAM" id="SSF161033">
    <property type="entry name" value="Photosystem II reaction center protein M, PsbM"/>
    <property type="match status" value="1"/>
</dbReference>
<proteinExistence type="inferred from homology"/>
<comment type="function">
    <text evidence="1">One of the components of the core complex of photosystem II (PSII). PSII is a light-driven water:plastoquinone oxidoreductase that uses light energy to abstract electrons from H(2)O, generating O(2) and a proton gradient subsequently used for ATP formation. It consists of a core antenna complex that captures photons, and an electron transfer chain that converts photonic excitation into a charge separation. This subunit is found at the monomer-monomer interface.</text>
</comment>
<comment type="subunit">
    <text evidence="3">PSII is composed of 1 copy each of membrane proteins PsbA, PsbB, PsbC, PsbD, PsbE, PsbF, PsbH, PsbI, PsbJ, PsbK, PsbL, PsbM, PsbT, PsbX, PsbY, Psb30/Ycf12, peripheral proteins PsbO, CyanoQ (PsbQ), PsbU, PsbV and a large number of cofactors. It forms dimeric complexes.</text>
</comment>
<comment type="subcellular location">
    <subcellularLocation>
        <location evidence="1">Cellular thylakoid membrane</location>
        <topology evidence="1">Single-pass membrane protein</topology>
    </subcellularLocation>
</comment>
<comment type="similarity">
    <text evidence="1">Belongs to the PsbM family.</text>
</comment>
<accession>Q46H51</accession>
<organism>
    <name type="scientific">Prochlorococcus marinus (strain NATL2A)</name>
    <dbReference type="NCBI Taxonomy" id="59920"/>
    <lineage>
        <taxon>Bacteria</taxon>
        <taxon>Bacillati</taxon>
        <taxon>Cyanobacteriota</taxon>
        <taxon>Cyanophyceae</taxon>
        <taxon>Synechococcales</taxon>
        <taxon>Prochlorococcaceae</taxon>
        <taxon>Prochlorococcus</taxon>
    </lineage>
</organism>
<name>PSBM_PROMT</name>
<gene>
    <name evidence="1" type="primary">psbM</name>
    <name type="ordered locus">PMN2A_1693</name>
</gene>
<reference key="1">
    <citation type="journal article" date="2007" name="PLoS Genet.">
        <title>Patterns and implications of gene gain and loss in the evolution of Prochlorococcus.</title>
        <authorList>
            <person name="Kettler G.C."/>
            <person name="Martiny A.C."/>
            <person name="Huang K."/>
            <person name="Zucker J."/>
            <person name="Coleman M.L."/>
            <person name="Rodrigue S."/>
            <person name="Chen F."/>
            <person name="Lapidus A."/>
            <person name="Ferriera S."/>
            <person name="Johnson J."/>
            <person name="Steglich C."/>
            <person name="Church G.M."/>
            <person name="Richardson P."/>
            <person name="Chisholm S.W."/>
        </authorList>
    </citation>
    <scope>NUCLEOTIDE SEQUENCE [LARGE SCALE GENOMIC DNA]</scope>
    <source>
        <strain>NATL2A</strain>
    </source>
</reference>
<sequence length="52" mass="5579">METTSFGFAASLLFVGVPTIFLIGLFVSTSDGEKSSFYSDTSKGRLSPEPKK</sequence>
<evidence type="ECO:0000255" key="1">
    <source>
        <dbReference type="HAMAP-Rule" id="MF_00438"/>
    </source>
</evidence>
<evidence type="ECO:0000256" key="2">
    <source>
        <dbReference type="SAM" id="MobiDB-lite"/>
    </source>
</evidence>
<evidence type="ECO:0000305" key="3"/>